<name>MVD1_RAT</name>
<accession>Q62967</accession>
<accession>Q642E5</accession>
<sequence>MASEKPQDLMVTCTAPVNIAVIKYWGKRDEALILPINSSLSVTLHQDQLKTTTTAAISKDFTEDRIWLNGREEDVGQPRLQACLREIRRLARKRRSTGDGDALPLSLGYKVHVASVNNFPTAAGLASSAAGYACLAYTLARVYGVEGDLSEVARRGSGSACRSLYGGFVEWQMGEQADGKDSIARQIAPEWHWPQLRVLILVVSAEKKPTGSTVGMQTSVATSTLLKFRAESIVPERMKEMTRCIQEQDFQAFAQLTMKDSNQFHATCLDTFPPISYLNDTSRRIIQLVHRFNAHHGQTKVAYTFDAGPNAVIFTLEDTVAEFVAAVRHSFPPAANGDKFLKGLQVAPVLLSDELKTSLATEPSPGGVQYIIATQVGPGPQVLDDPHHHLLGPDGLPQRDL</sequence>
<proteinExistence type="evidence at protein level"/>
<organism>
    <name type="scientific">Rattus norvegicus</name>
    <name type="common">Rat</name>
    <dbReference type="NCBI Taxonomy" id="10116"/>
    <lineage>
        <taxon>Eukaryota</taxon>
        <taxon>Metazoa</taxon>
        <taxon>Chordata</taxon>
        <taxon>Craniata</taxon>
        <taxon>Vertebrata</taxon>
        <taxon>Euteleostomi</taxon>
        <taxon>Mammalia</taxon>
        <taxon>Eutheria</taxon>
        <taxon>Euarchontoglires</taxon>
        <taxon>Glires</taxon>
        <taxon>Rodentia</taxon>
        <taxon>Myomorpha</taxon>
        <taxon>Muroidea</taxon>
        <taxon>Muridae</taxon>
        <taxon>Murinae</taxon>
        <taxon>Rattus</taxon>
    </lineage>
</organism>
<evidence type="ECO:0000250" key="1">
    <source>
        <dbReference type="UniProtKB" id="O23722"/>
    </source>
</evidence>
<evidence type="ECO:0000250" key="2">
    <source>
        <dbReference type="UniProtKB" id="P53602"/>
    </source>
</evidence>
<evidence type="ECO:0000256" key="3">
    <source>
        <dbReference type="SAM" id="MobiDB-lite"/>
    </source>
</evidence>
<evidence type="ECO:0000269" key="4">
    <source>
    </source>
</evidence>
<evidence type="ECO:0000305" key="5"/>
<dbReference type="EC" id="4.1.1.33" evidence="2"/>
<dbReference type="EMBL" id="U53706">
    <property type="protein sequence ID" value="AAB00192.1"/>
    <property type="molecule type" value="mRNA"/>
</dbReference>
<dbReference type="EMBL" id="AABR07072659">
    <property type="status" value="NOT_ANNOTATED_CDS"/>
    <property type="molecule type" value="Genomic_DNA"/>
</dbReference>
<dbReference type="EMBL" id="CH473972">
    <property type="protein sequence ID" value="EDL92747.1"/>
    <property type="molecule type" value="Genomic_DNA"/>
</dbReference>
<dbReference type="EMBL" id="BC081784">
    <property type="protein sequence ID" value="AAH81784.1"/>
    <property type="molecule type" value="mRNA"/>
</dbReference>
<dbReference type="RefSeq" id="NP_112324.2">
    <property type="nucleotide sequence ID" value="NM_031062.3"/>
</dbReference>
<dbReference type="SMR" id="Q62967"/>
<dbReference type="FunCoup" id="Q62967">
    <property type="interactions" value="1073"/>
</dbReference>
<dbReference type="STRING" id="10116.ENSRNOP00000018145"/>
<dbReference type="ChEMBL" id="CHEMBL4296309"/>
<dbReference type="GuidetoPHARMACOLOGY" id="642"/>
<dbReference type="iPTMnet" id="Q62967"/>
<dbReference type="PhosphoSitePlus" id="Q62967"/>
<dbReference type="jPOST" id="Q62967"/>
<dbReference type="PaxDb" id="10116-ENSRNOP00000018145"/>
<dbReference type="GeneID" id="81726"/>
<dbReference type="KEGG" id="rno:81726"/>
<dbReference type="UCSC" id="RGD:621292">
    <property type="organism name" value="rat"/>
</dbReference>
<dbReference type="AGR" id="RGD:621292"/>
<dbReference type="CTD" id="4597"/>
<dbReference type="RGD" id="621292">
    <property type="gene designation" value="Mvd"/>
</dbReference>
<dbReference type="VEuPathDB" id="HostDB:ENSRNOG00000013376"/>
<dbReference type="eggNOG" id="KOG2833">
    <property type="taxonomic scope" value="Eukaryota"/>
</dbReference>
<dbReference type="HOGENOM" id="CLU_040369_4_4_1"/>
<dbReference type="InParanoid" id="Q62967"/>
<dbReference type="PhylomeDB" id="Q62967"/>
<dbReference type="TreeFam" id="TF105952"/>
<dbReference type="BRENDA" id="4.1.1.33">
    <property type="organism ID" value="5301"/>
</dbReference>
<dbReference type="Reactome" id="R-RNO-191273">
    <property type="pathway name" value="Cholesterol biosynthesis"/>
</dbReference>
<dbReference type="Reactome" id="R-RNO-446199">
    <property type="pathway name" value="Synthesis of Dolichyl-phosphate"/>
</dbReference>
<dbReference type="SABIO-RK" id="Q62967"/>
<dbReference type="UniPathway" id="UPA00063"/>
<dbReference type="PRO" id="PR:Q62967"/>
<dbReference type="Proteomes" id="UP000002494">
    <property type="component" value="Chromosome 19"/>
</dbReference>
<dbReference type="Proteomes" id="UP000234681">
    <property type="component" value="Chromosome 19"/>
</dbReference>
<dbReference type="Bgee" id="ENSRNOG00000013376">
    <property type="expression patterns" value="Expressed in ovary and 20 other cell types or tissues"/>
</dbReference>
<dbReference type="GO" id="GO:0005829">
    <property type="term" value="C:cytosol"/>
    <property type="evidence" value="ECO:0000266"/>
    <property type="project" value="RGD"/>
</dbReference>
<dbReference type="GO" id="GO:0005782">
    <property type="term" value="C:peroxisomal matrix"/>
    <property type="evidence" value="ECO:0000314"/>
    <property type="project" value="RGD"/>
</dbReference>
<dbReference type="GO" id="GO:0005777">
    <property type="term" value="C:peroxisome"/>
    <property type="evidence" value="ECO:0000314"/>
    <property type="project" value="RGD"/>
</dbReference>
<dbReference type="GO" id="GO:0005524">
    <property type="term" value="F:ATP binding"/>
    <property type="evidence" value="ECO:0007669"/>
    <property type="project" value="UniProtKB-KW"/>
</dbReference>
<dbReference type="GO" id="GO:0004163">
    <property type="term" value="F:diphosphomevalonate decarboxylase activity"/>
    <property type="evidence" value="ECO:0000314"/>
    <property type="project" value="RGD"/>
</dbReference>
<dbReference type="GO" id="GO:0030544">
    <property type="term" value="F:Hsp70 protein binding"/>
    <property type="evidence" value="ECO:0000266"/>
    <property type="project" value="RGD"/>
</dbReference>
<dbReference type="GO" id="GO:0042803">
    <property type="term" value="F:protein homodimerization activity"/>
    <property type="evidence" value="ECO:0000266"/>
    <property type="project" value="RGD"/>
</dbReference>
<dbReference type="GO" id="GO:0006695">
    <property type="term" value="P:cholesterol biosynthetic process"/>
    <property type="evidence" value="ECO:0000303"/>
    <property type="project" value="RGD"/>
</dbReference>
<dbReference type="GO" id="GO:0019287">
    <property type="term" value="P:isopentenyl diphosphate biosynthetic process, mevalonate pathway"/>
    <property type="evidence" value="ECO:0000314"/>
    <property type="project" value="RGD"/>
</dbReference>
<dbReference type="GO" id="GO:0008299">
    <property type="term" value="P:isoprenoid biosynthetic process"/>
    <property type="evidence" value="ECO:0000266"/>
    <property type="project" value="RGD"/>
</dbReference>
<dbReference type="GO" id="GO:0008284">
    <property type="term" value="P:positive regulation of cell population proliferation"/>
    <property type="evidence" value="ECO:0000266"/>
    <property type="project" value="RGD"/>
</dbReference>
<dbReference type="GO" id="GO:0009410">
    <property type="term" value="P:response to xenobiotic stimulus"/>
    <property type="evidence" value="ECO:0000270"/>
    <property type="project" value="RGD"/>
</dbReference>
<dbReference type="FunFam" id="3.30.230.10:FF:000018">
    <property type="entry name" value="Diphosphomevalonate decarboxylase"/>
    <property type="match status" value="1"/>
</dbReference>
<dbReference type="FunFam" id="3.30.70.890:FF:000005">
    <property type="entry name" value="Diphosphomevalonate decarboxylase"/>
    <property type="match status" value="1"/>
</dbReference>
<dbReference type="Gene3D" id="3.30.230.10">
    <property type="match status" value="1"/>
</dbReference>
<dbReference type="Gene3D" id="3.30.70.890">
    <property type="entry name" value="GHMP kinase, C-terminal domain"/>
    <property type="match status" value="1"/>
</dbReference>
<dbReference type="InterPro" id="IPR036554">
    <property type="entry name" value="GHMP_kinase_C_sf"/>
</dbReference>
<dbReference type="InterPro" id="IPR005935">
    <property type="entry name" value="Mev_decarb"/>
</dbReference>
<dbReference type="InterPro" id="IPR029765">
    <property type="entry name" value="Mev_diP_decarb"/>
</dbReference>
<dbReference type="InterPro" id="IPR053859">
    <property type="entry name" value="MVD-like_N"/>
</dbReference>
<dbReference type="InterPro" id="IPR041431">
    <property type="entry name" value="Mvd1_C"/>
</dbReference>
<dbReference type="InterPro" id="IPR020568">
    <property type="entry name" value="Ribosomal_Su5_D2-typ_SF"/>
</dbReference>
<dbReference type="InterPro" id="IPR014721">
    <property type="entry name" value="Ribsml_uS5_D2-typ_fold_subgr"/>
</dbReference>
<dbReference type="NCBIfam" id="TIGR01240">
    <property type="entry name" value="mevDPdecarb"/>
    <property type="match status" value="1"/>
</dbReference>
<dbReference type="PANTHER" id="PTHR10977">
    <property type="entry name" value="DIPHOSPHOMEVALONATE DECARBOXYLASE"/>
    <property type="match status" value="1"/>
</dbReference>
<dbReference type="PANTHER" id="PTHR10977:SF3">
    <property type="entry name" value="DIPHOSPHOMEVALONATE DECARBOXYLASE"/>
    <property type="match status" value="1"/>
</dbReference>
<dbReference type="Pfam" id="PF18376">
    <property type="entry name" value="MDD_C"/>
    <property type="match status" value="1"/>
</dbReference>
<dbReference type="Pfam" id="PF22700">
    <property type="entry name" value="MVD-like_N"/>
    <property type="match status" value="1"/>
</dbReference>
<dbReference type="PIRSF" id="PIRSF015950">
    <property type="entry name" value="Mev_P_decrbx"/>
    <property type="match status" value="1"/>
</dbReference>
<dbReference type="SUPFAM" id="SSF55060">
    <property type="entry name" value="GHMP Kinase, C-terminal domain"/>
    <property type="match status" value="1"/>
</dbReference>
<dbReference type="SUPFAM" id="SSF54211">
    <property type="entry name" value="Ribosomal protein S5 domain 2-like"/>
    <property type="match status" value="1"/>
</dbReference>
<protein>
    <recommendedName>
        <fullName>Diphosphomevalonate decarboxylase</fullName>
        <ecNumber evidence="2">4.1.1.33</ecNumber>
    </recommendedName>
    <alternativeName>
        <fullName>Mevalonate (diphospho)decarboxylase</fullName>
        <shortName>MDDase</shortName>
    </alternativeName>
    <alternativeName>
        <fullName>Mevalonate pyrophosphate decarboxylase</fullName>
    </alternativeName>
</protein>
<keyword id="KW-0007">Acetylation</keyword>
<keyword id="KW-0067">ATP-binding</keyword>
<keyword id="KW-0152">Cholesterol biosynthesis</keyword>
<keyword id="KW-0153">Cholesterol metabolism</keyword>
<keyword id="KW-0963">Cytoplasm</keyword>
<keyword id="KW-0444">Lipid biosynthesis</keyword>
<keyword id="KW-0443">Lipid metabolism</keyword>
<keyword id="KW-0456">Lyase</keyword>
<keyword id="KW-0547">Nucleotide-binding</keyword>
<keyword id="KW-1185">Reference proteome</keyword>
<keyword id="KW-0752">Steroid biosynthesis</keyword>
<keyword id="KW-0753">Steroid metabolism</keyword>
<keyword id="KW-0756">Sterol biosynthesis</keyword>
<keyword id="KW-1207">Sterol metabolism</keyword>
<comment type="function">
    <text evidence="2">Catalyzes the ATP dependent decarboxylation of (R)-5-diphosphomevalonate to form isopentenyl diphosphate (IPP). Functions in the mevalonate (MVA) pathway leading to isopentenyl diphosphate (IPP), a key precursor for the biosynthesis of isoprenoids and sterol synthesis.</text>
</comment>
<comment type="catalytic activity">
    <reaction evidence="2">
        <text>(R)-5-diphosphomevalonate + ATP = isopentenyl diphosphate + ADP + phosphate + CO2</text>
        <dbReference type="Rhea" id="RHEA:23732"/>
        <dbReference type="ChEBI" id="CHEBI:16526"/>
        <dbReference type="ChEBI" id="CHEBI:30616"/>
        <dbReference type="ChEBI" id="CHEBI:43474"/>
        <dbReference type="ChEBI" id="CHEBI:57557"/>
        <dbReference type="ChEBI" id="CHEBI:128769"/>
        <dbReference type="ChEBI" id="CHEBI:456216"/>
        <dbReference type="EC" id="4.1.1.33"/>
    </reaction>
</comment>
<comment type="pathway">
    <text evidence="5">Steroid biosynthesis; cholesterol biosynthesis.</text>
</comment>
<comment type="subunit">
    <text evidence="2">Homodimer.</text>
</comment>
<comment type="subcellular location">
    <subcellularLocation>
        <location evidence="4">Cytoplasm</location>
    </subcellularLocation>
</comment>
<comment type="similarity">
    <text evidence="5">Belongs to the diphosphomevalonate decarboxylase family.</text>
</comment>
<comment type="caution">
    <text evidence="2 4">Was originally thought to be located in the peroxisome (By similarity). However, was later shown to be cytosolic (PubMed:11725955).</text>
</comment>
<feature type="initiator methionine" description="Removed" evidence="2">
    <location>
        <position position="1"/>
    </location>
</feature>
<feature type="chain" id="PRO_0000087014" description="Diphosphomevalonate decarboxylase">
    <location>
        <begin position="2"/>
        <end position="401"/>
    </location>
</feature>
<feature type="region of interest" description="Disordered" evidence="3">
    <location>
        <begin position="382"/>
        <end position="401"/>
    </location>
</feature>
<feature type="binding site" evidence="1">
    <location>
        <begin position="24"/>
        <end position="27"/>
    </location>
    <ligand>
        <name>(R)-5-diphosphomevalonate</name>
        <dbReference type="ChEBI" id="CHEBI:57557"/>
    </ligand>
</feature>
<feature type="binding site" evidence="1">
    <location>
        <position position="79"/>
    </location>
    <ligand>
        <name>(R)-5-diphosphomevalonate</name>
        <dbReference type="ChEBI" id="CHEBI:57557"/>
    </ligand>
</feature>
<feature type="binding site" evidence="1">
    <location>
        <begin position="157"/>
        <end position="162"/>
    </location>
    <ligand>
        <name>(R)-5-diphosphomevalonate</name>
        <dbReference type="ChEBI" id="CHEBI:57557"/>
    </ligand>
</feature>
<feature type="binding site" evidence="1">
    <location>
        <position position="213"/>
    </location>
    <ligand>
        <name>(R)-5-diphosphomevalonate</name>
        <dbReference type="ChEBI" id="CHEBI:57557"/>
    </ligand>
</feature>
<feature type="modified residue" description="N-acetylalanine" evidence="2">
    <location>
        <position position="2"/>
    </location>
</feature>
<feature type="sequence conflict" description="In Ref. 1; AAB00192." evidence="5" ref="1">
    <original>S</original>
    <variation>P</variation>
    <location>
        <position position="38"/>
    </location>
</feature>
<gene>
    <name type="primary">Mvd</name>
    <name type="synonym">Mpd</name>
</gene>
<reference key="1">
    <citation type="submission" date="1996-05" db="EMBL/GenBank/DDBJ databases">
        <title>Rat mevalonate pyrophosphate decarboxylase.</title>
        <authorList>
            <person name="Jeng C.-J."/>
            <person name="Schweitzer E.S."/>
        </authorList>
    </citation>
    <scope>NUCLEOTIDE SEQUENCE [MRNA]</scope>
    <source>
        <tissue>Pheochromocytoma</tissue>
    </source>
</reference>
<reference key="2">
    <citation type="journal article" date="2012" name="Nat. Commun.">
        <title>Quantitative maps of protein phosphorylation sites across 14 different rat organs and tissues.</title>
        <authorList>
            <person name="Lundby A."/>
            <person name="Secher A."/>
            <person name="Lage K."/>
            <person name="Nordsborg N.B."/>
            <person name="Dmytriyev A."/>
            <person name="Lundby C."/>
            <person name="Olsen J.V."/>
        </authorList>
    </citation>
    <scope>IDENTIFICATION BY MASS SPECTROMETRY [LARGE SCALE ANALYSIS]</scope>
</reference>
<reference key="3">
    <citation type="journal article" date="2004" name="Nature">
        <title>Genome sequence of the Brown Norway rat yields insights into mammalian evolution.</title>
        <authorList>
            <person name="Gibbs R.A."/>
            <person name="Weinstock G.M."/>
            <person name="Metzker M.L."/>
            <person name="Muzny D.M."/>
            <person name="Sodergren E.J."/>
            <person name="Scherer S."/>
            <person name="Scott G."/>
            <person name="Steffen D."/>
            <person name="Worley K.C."/>
            <person name="Burch P.E."/>
            <person name="Okwuonu G."/>
            <person name="Hines S."/>
            <person name="Lewis L."/>
            <person name="Deramo C."/>
            <person name="Delgado O."/>
            <person name="Dugan-Rocha S."/>
            <person name="Miner G."/>
            <person name="Morgan M."/>
            <person name="Hawes A."/>
            <person name="Gill R."/>
            <person name="Holt R.A."/>
            <person name="Adams M.D."/>
            <person name="Amanatides P.G."/>
            <person name="Baden-Tillson H."/>
            <person name="Barnstead M."/>
            <person name="Chin S."/>
            <person name="Evans C.A."/>
            <person name="Ferriera S."/>
            <person name="Fosler C."/>
            <person name="Glodek A."/>
            <person name="Gu Z."/>
            <person name="Jennings D."/>
            <person name="Kraft C.L."/>
            <person name="Nguyen T."/>
            <person name="Pfannkoch C.M."/>
            <person name="Sitter C."/>
            <person name="Sutton G.G."/>
            <person name="Venter J.C."/>
            <person name="Woodage T."/>
            <person name="Smith D."/>
            <person name="Lee H.-M."/>
            <person name="Gustafson E."/>
            <person name="Cahill P."/>
            <person name="Kana A."/>
            <person name="Doucette-Stamm L."/>
            <person name="Weinstock K."/>
            <person name="Fechtel K."/>
            <person name="Weiss R.B."/>
            <person name="Dunn D.M."/>
            <person name="Green E.D."/>
            <person name="Blakesley R.W."/>
            <person name="Bouffard G.G."/>
            <person name="De Jong P.J."/>
            <person name="Osoegawa K."/>
            <person name="Zhu B."/>
            <person name="Marra M."/>
            <person name="Schein J."/>
            <person name="Bosdet I."/>
            <person name="Fjell C."/>
            <person name="Jones S."/>
            <person name="Krzywinski M."/>
            <person name="Mathewson C."/>
            <person name="Siddiqui A."/>
            <person name="Wye N."/>
            <person name="McPherson J."/>
            <person name="Zhao S."/>
            <person name="Fraser C.M."/>
            <person name="Shetty J."/>
            <person name="Shatsman S."/>
            <person name="Geer K."/>
            <person name="Chen Y."/>
            <person name="Abramzon S."/>
            <person name="Nierman W.C."/>
            <person name="Havlak P.H."/>
            <person name="Chen R."/>
            <person name="Durbin K.J."/>
            <person name="Egan A."/>
            <person name="Ren Y."/>
            <person name="Song X.-Z."/>
            <person name="Li B."/>
            <person name="Liu Y."/>
            <person name="Qin X."/>
            <person name="Cawley S."/>
            <person name="Cooney A.J."/>
            <person name="D'Souza L.M."/>
            <person name="Martin K."/>
            <person name="Wu J.Q."/>
            <person name="Gonzalez-Garay M.L."/>
            <person name="Jackson A.R."/>
            <person name="Kalafus K.J."/>
            <person name="McLeod M.P."/>
            <person name="Milosavljevic A."/>
            <person name="Virk D."/>
            <person name="Volkov A."/>
            <person name="Wheeler D.A."/>
            <person name="Zhang Z."/>
            <person name="Bailey J.A."/>
            <person name="Eichler E.E."/>
            <person name="Tuzun E."/>
            <person name="Birney E."/>
            <person name="Mongin E."/>
            <person name="Ureta-Vidal A."/>
            <person name="Woodwark C."/>
            <person name="Zdobnov E."/>
            <person name="Bork P."/>
            <person name="Suyama M."/>
            <person name="Torrents D."/>
            <person name="Alexandersson M."/>
            <person name="Trask B.J."/>
            <person name="Young J.M."/>
            <person name="Huang H."/>
            <person name="Wang H."/>
            <person name="Xing H."/>
            <person name="Daniels S."/>
            <person name="Gietzen D."/>
            <person name="Schmidt J."/>
            <person name="Stevens K."/>
            <person name="Vitt U."/>
            <person name="Wingrove J."/>
            <person name="Camara F."/>
            <person name="Mar Alba M."/>
            <person name="Abril J.F."/>
            <person name="Guigo R."/>
            <person name="Smit A."/>
            <person name="Dubchak I."/>
            <person name="Rubin E.M."/>
            <person name="Couronne O."/>
            <person name="Poliakov A."/>
            <person name="Huebner N."/>
            <person name="Ganten D."/>
            <person name="Goesele C."/>
            <person name="Hummel O."/>
            <person name="Kreitler T."/>
            <person name="Lee Y.-A."/>
            <person name="Monti J."/>
            <person name="Schulz H."/>
            <person name="Zimdahl H."/>
            <person name="Himmelbauer H."/>
            <person name="Lehrach H."/>
            <person name="Jacob H.J."/>
            <person name="Bromberg S."/>
            <person name="Gullings-Handley J."/>
            <person name="Jensen-Seaman M.I."/>
            <person name="Kwitek A.E."/>
            <person name="Lazar J."/>
            <person name="Pasko D."/>
            <person name="Tonellato P.J."/>
            <person name="Twigger S."/>
            <person name="Ponting C.P."/>
            <person name="Duarte J.M."/>
            <person name="Rice S."/>
            <person name="Goodstadt L."/>
            <person name="Beatson S.A."/>
            <person name="Emes R.D."/>
            <person name="Winter E.E."/>
            <person name="Webber C."/>
            <person name="Brandt P."/>
            <person name="Nyakatura G."/>
            <person name="Adetobi M."/>
            <person name="Chiaromonte F."/>
            <person name="Elnitski L."/>
            <person name="Eswara P."/>
            <person name="Hardison R.C."/>
            <person name="Hou M."/>
            <person name="Kolbe D."/>
            <person name="Makova K."/>
            <person name="Miller W."/>
            <person name="Nekrutenko A."/>
            <person name="Riemer C."/>
            <person name="Schwartz S."/>
            <person name="Taylor J."/>
            <person name="Yang S."/>
            <person name="Zhang Y."/>
            <person name="Lindpaintner K."/>
            <person name="Andrews T.D."/>
            <person name="Caccamo M."/>
            <person name="Clamp M."/>
            <person name="Clarke L."/>
            <person name="Curwen V."/>
            <person name="Durbin R.M."/>
            <person name="Eyras E."/>
            <person name="Searle S.M."/>
            <person name="Cooper G.M."/>
            <person name="Batzoglou S."/>
            <person name="Brudno M."/>
            <person name="Sidow A."/>
            <person name="Stone E.A."/>
            <person name="Payseur B.A."/>
            <person name="Bourque G."/>
            <person name="Lopez-Otin C."/>
            <person name="Puente X.S."/>
            <person name="Chakrabarti K."/>
            <person name="Chatterji S."/>
            <person name="Dewey C."/>
            <person name="Pachter L."/>
            <person name="Bray N."/>
            <person name="Yap V.B."/>
            <person name="Caspi A."/>
            <person name="Tesler G."/>
            <person name="Pevzner P.A."/>
            <person name="Haussler D."/>
            <person name="Roskin K.M."/>
            <person name="Baertsch R."/>
            <person name="Clawson H."/>
            <person name="Furey T.S."/>
            <person name="Hinrichs A.S."/>
            <person name="Karolchik D."/>
            <person name="Kent W.J."/>
            <person name="Rosenbloom K.R."/>
            <person name="Trumbower H."/>
            <person name="Weirauch M."/>
            <person name="Cooper D.N."/>
            <person name="Stenson P.D."/>
            <person name="Ma B."/>
            <person name="Brent M."/>
            <person name="Arumugam M."/>
            <person name="Shteynberg D."/>
            <person name="Copley R.R."/>
            <person name="Taylor M.S."/>
            <person name="Riethman H."/>
            <person name="Mudunuri U."/>
            <person name="Peterson J."/>
            <person name="Guyer M."/>
            <person name="Felsenfeld A."/>
            <person name="Old S."/>
            <person name="Mockrin S."/>
            <person name="Collins F.S."/>
        </authorList>
    </citation>
    <scope>NUCLEOTIDE SEQUENCE [LARGE SCALE GENOMIC DNA]</scope>
    <source>
        <strain>Brown Norway</strain>
    </source>
</reference>
<reference key="4">
    <citation type="submission" date="2005-07" db="EMBL/GenBank/DDBJ databases">
        <authorList>
            <person name="Mural R.J."/>
            <person name="Adams M.D."/>
            <person name="Myers E.W."/>
            <person name="Smith H.O."/>
            <person name="Venter J.C."/>
        </authorList>
    </citation>
    <scope>NUCLEOTIDE SEQUENCE [LARGE SCALE GENOMIC DNA]</scope>
</reference>
<reference key="5">
    <citation type="journal article" date="2004" name="Genome Res.">
        <title>The status, quality, and expansion of the NIH full-length cDNA project: the Mammalian Gene Collection (MGC).</title>
        <authorList>
            <consortium name="The MGC Project Team"/>
        </authorList>
    </citation>
    <scope>NUCLEOTIDE SEQUENCE [LARGE SCALE MRNA]</scope>
    <source>
        <tissue>Testis</tissue>
    </source>
</reference>
<reference key="6">
    <citation type="journal article" date="2001" name="Biol. Pharm. Bull.">
        <title>Mevalonate pyrophosphate decarboxylase is predominantly located in the cytosol of rat hepatocytes.</title>
        <authorList>
            <person name="Michihara A."/>
            <person name="Sawamura M."/>
            <person name="Yamori Y."/>
            <person name="Akasaki K."/>
            <person name="Tsuji H."/>
        </authorList>
    </citation>
    <scope>SUBCELLULAR LOCATION</scope>
</reference>